<protein>
    <recommendedName>
        <fullName evidence="4">6-phospho-alpha-glucosidase</fullName>
        <ecNumber evidence="3">3.2.1.122</ecNumber>
    </recommendedName>
</protein>
<evidence type="ECO:0000250" key="1"/>
<evidence type="ECO:0000269" key="2">
    <source>
    </source>
</evidence>
<evidence type="ECO:0000269" key="3">
    <source>
    </source>
</evidence>
<evidence type="ECO:0000303" key="4">
    <source>
    </source>
</evidence>
<evidence type="ECO:0000303" key="5">
    <source>
    </source>
</evidence>
<evidence type="ECO:0000305" key="6"/>
<evidence type="ECO:0007829" key="7">
    <source>
        <dbReference type="PDB" id="6DUX"/>
    </source>
</evidence>
<sequence>MKKFSVVIAGGGSTFTPGIVLMLLANQDRFPLRSLKFYDNDGARQETIAEACKVILKEQAPEIEFSYTTDPQAAFTDVDFVMAHIRVGKYPMREQDEKIPLRHGVLGQETCGPGGIAYGMRSIGGVLELVDYMEKYSPNAWMLNYSNPAAIVAEATRRLRPNAKILNICDMPIGIEGRMAQIVGLKDRKQMRVRYYGLNHFGWWTSIEDLDGNDLMPKLREYVAKYGYVPPSNDPHTEASWNDTFAKAKDVQALDPQTMPNTYLKYYLFPDYVVAHSNPERTRANEVMDHREKNVFSACRAIIAAGKSTAGDLEIDEHASYIVDLATAIAFNTQERMLLIVPNNGAIHNFDADAMVEIPCLVGHNGPEPLTVGDIPHFQKGLMSQQVAVEKLVVDAWEQRSYHKLWQAITLSKTVPSASVAKAILDDLIAANKDYWPELH</sequence>
<keyword id="KW-0002">3D-structure</keyword>
<keyword id="KW-0119">Carbohydrate metabolism</keyword>
<keyword id="KW-0170">Cobalt</keyword>
<keyword id="KW-0903">Direct protein sequencing</keyword>
<keyword id="KW-0326">Glycosidase</keyword>
<keyword id="KW-0378">Hydrolase</keyword>
<keyword id="KW-0464">Manganese</keyword>
<keyword id="KW-0479">Metal-binding</keyword>
<keyword id="KW-0520">NAD</keyword>
<keyword id="KW-0533">Nickel</keyword>
<organism>
    <name type="scientific">Klebsiella pneumoniae</name>
    <dbReference type="NCBI Taxonomy" id="573"/>
    <lineage>
        <taxon>Bacteria</taxon>
        <taxon>Pseudomonadati</taxon>
        <taxon>Pseudomonadota</taxon>
        <taxon>Gammaproteobacteria</taxon>
        <taxon>Enterobacterales</taxon>
        <taxon>Enterobacteriaceae</taxon>
        <taxon>Klebsiella/Raoultella group</taxon>
        <taxon>Klebsiella</taxon>
        <taxon>Klebsiella pneumoniae complex</taxon>
    </lineage>
</organism>
<accession>Q9AGA6</accession>
<feature type="chain" id="PRO_0000169856" description="6-phospho-alpha-glucosidase">
    <location>
        <begin position="1"/>
        <end position="440"/>
    </location>
</feature>
<feature type="active site" description="Proton donor" evidence="1">
    <location>
        <position position="170"/>
    </location>
</feature>
<feature type="active site" description="Proton acceptor" evidence="1">
    <location>
        <position position="263"/>
    </location>
</feature>
<feature type="binding site" evidence="1">
    <location>
        <begin position="4"/>
        <end position="70"/>
    </location>
    <ligand>
        <name>NAD(+)</name>
        <dbReference type="ChEBI" id="CHEBI:57540"/>
    </ligand>
</feature>
<feature type="binding site" evidence="1">
    <location>
        <position position="93"/>
    </location>
    <ligand>
        <name>substrate</name>
    </ligand>
</feature>
<feature type="binding site" evidence="1">
    <location>
        <position position="147"/>
    </location>
    <ligand>
        <name>substrate</name>
    </ligand>
</feature>
<feature type="binding site" evidence="1">
    <location>
        <position position="169"/>
    </location>
    <ligand>
        <name>Mn(2+)</name>
        <dbReference type="ChEBI" id="CHEBI:29035"/>
    </ligand>
</feature>
<feature type="binding site" evidence="1">
    <location>
        <position position="200"/>
    </location>
    <ligand>
        <name>Mn(2+)</name>
        <dbReference type="ChEBI" id="CHEBI:29035"/>
    </ligand>
</feature>
<feature type="binding site" evidence="1">
    <location>
        <position position="283"/>
    </location>
    <ligand>
        <name>substrate</name>
    </ligand>
</feature>
<feature type="site" description="Increases basicity of active site Tyr" evidence="1">
    <location>
        <position position="109"/>
    </location>
</feature>
<feature type="strand" evidence="7">
    <location>
        <begin position="4"/>
        <end position="9"/>
    </location>
</feature>
<feature type="helix" evidence="7">
    <location>
        <begin position="16"/>
        <end position="25"/>
    </location>
</feature>
<feature type="turn" evidence="7">
    <location>
        <begin position="26"/>
        <end position="29"/>
    </location>
</feature>
<feature type="strand" evidence="7">
    <location>
        <begin position="32"/>
        <end position="38"/>
    </location>
</feature>
<feature type="helix" evidence="7">
    <location>
        <begin position="42"/>
        <end position="59"/>
    </location>
</feature>
<feature type="strand" evidence="7">
    <location>
        <begin position="63"/>
        <end position="69"/>
    </location>
</feature>
<feature type="helix" evidence="7">
    <location>
        <begin position="71"/>
        <end position="75"/>
    </location>
</feature>
<feature type="strand" evidence="7">
    <location>
        <begin position="79"/>
        <end position="83"/>
    </location>
</feature>
<feature type="helix" evidence="7">
    <location>
        <begin position="89"/>
        <end position="102"/>
    </location>
</feature>
<feature type="strand" evidence="7">
    <location>
        <begin position="109"/>
        <end position="112"/>
    </location>
</feature>
<feature type="helix" evidence="7">
    <location>
        <begin position="113"/>
        <end position="136"/>
    </location>
</feature>
<feature type="strand" evidence="7">
    <location>
        <begin position="141"/>
        <end position="144"/>
    </location>
</feature>
<feature type="helix" evidence="7">
    <location>
        <begin position="149"/>
        <end position="159"/>
    </location>
</feature>
<feature type="strand" evidence="7">
    <location>
        <begin position="165"/>
        <end position="167"/>
    </location>
</feature>
<feature type="helix" evidence="7">
    <location>
        <begin position="171"/>
        <end position="183"/>
    </location>
</feature>
<feature type="helix" evidence="7">
    <location>
        <begin position="188"/>
        <end position="190"/>
    </location>
</feature>
<feature type="strand" evidence="7">
    <location>
        <begin position="191"/>
        <end position="198"/>
    </location>
</feature>
<feature type="strand" evidence="7">
    <location>
        <begin position="201"/>
        <end position="209"/>
    </location>
</feature>
<feature type="helix" evidence="7">
    <location>
        <begin position="216"/>
        <end position="226"/>
    </location>
</feature>
<feature type="helix" evidence="7">
    <location>
        <begin position="240"/>
        <end position="252"/>
    </location>
</feature>
<feature type="strand" evidence="7">
    <location>
        <begin position="258"/>
        <end position="260"/>
    </location>
</feature>
<feature type="helix" evidence="7">
    <location>
        <begin position="262"/>
        <end position="264"/>
    </location>
</feature>
<feature type="helix" evidence="7">
    <location>
        <begin position="265"/>
        <end position="268"/>
    </location>
</feature>
<feature type="helix" evidence="7">
    <location>
        <begin position="270"/>
        <end position="275"/>
    </location>
</feature>
<feature type="helix" evidence="7">
    <location>
        <begin position="283"/>
        <end position="289"/>
    </location>
</feature>
<feature type="helix" evidence="7">
    <location>
        <begin position="291"/>
        <end position="305"/>
    </location>
</feature>
<feature type="helix" evidence="7">
    <location>
        <begin position="308"/>
        <end position="310"/>
    </location>
</feature>
<feature type="helix" evidence="7">
    <location>
        <begin position="318"/>
        <end position="320"/>
    </location>
</feature>
<feature type="helix" evidence="7">
    <location>
        <begin position="321"/>
        <end position="331"/>
    </location>
</feature>
<feature type="strand" evidence="7">
    <location>
        <begin position="335"/>
        <end position="342"/>
    </location>
</feature>
<feature type="strand" evidence="7">
    <location>
        <begin position="354"/>
        <end position="363"/>
    </location>
</feature>
<feature type="strand" evidence="7">
    <location>
        <begin position="366"/>
        <end position="370"/>
    </location>
</feature>
<feature type="helix" evidence="7">
    <location>
        <begin position="377"/>
        <end position="399"/>
    </location>
</feature>
<feature type="helix" evidence="7">
    <location>
        <begin position="402"/>
        <end position="411"/>
    </location>
</feature>
<feature type="helix" evidence="7">
    <location>
        <begin position="418"/>
        <end position="431"/>
    </location>
</feature>
<feature type="turn" evidence="7">
    <location>
        <begin position="432"/>
        <end position="435"/>
    </location>
</feature>
<comment type="function">
    <text evidence="2 3">Is involved in the catabolism of alpha-glycosides accumulated via a phosphoenolpyruvate-dependent phosphotransferase system (PEP-PTS). Hydrolyzes a wide variety of 6-phospho-alpha-D-glucosides including maltose-6'-phosphate, isomaltose-6'-phosphate, maltitol-6-phosphate, trehalose-6-phosphate and the 6'-phosphorylated derivatives of the five linkage-isomeric alpha-D-glucosyl-D-fructoses: trehalulose-6'-phosphate, turanose-6'-phosphate, maltulose-6'-phosphate, leucrose-6'-phosphate, and palatinose-6'-phosphate. However, sucrose-6-phosphate is not a substrate for this enzyme.</text>
</comment>
<comment type="catalytic activity">
    <reaction evidence="3">
        <text>alpha-maltose 6'-phosphate + H2O = D-glucose 6-phosphate + D-glucose</text>
        <dbReference type="Rhea" id="RHEA:20421"/>
        <dbReference type="ChEBI" id="CHEBI:4167"/>
        <dbReference type="ChEBI" id="CHEBI:15377"/>
        <dbReference type="ChEBI" id="CHEBI:57478"/>
        <dbReference type="ChEBI" id="CHEBI:61548"/>
        <dbReference type="EC" id="3.2.1.122"/>
    </reaction>
    <physiologicalReaction direction="left-to-right" evidence="3">
        <dbReference type="Rhea" id="RHEA:20422"/>
    </physiologicalReaction>
</comment>
<comment type="cofactor">
    <cofactor evidence="3">
        <name>NAD(+)</name>
        <dbReference type="ChEBI" id="CHEBI:57540"/>
    </cofactor>
</comment>
<comment type="cofactor">
    <cofactor evidence="3">
        <name>Mn(2+)</name>
        <dbReference type="ChEBI" id="CHEBI:29035"/>
    </cofactor>
    <cofactor evidence="3">
        <name>Co(2+)</name>
        <dbReference type="ChEBI" id="CHEBI:48828"/>
    </cofactor>
    <cofactor evidence="3">
        <name>Ni(2+)</name>
        <dbReference type="ChEBI" id="CHEBI:49786"/>
    </cofactor>
    <text evidence="3">Divalent metal cation. Requires Mn(2+), Co(2+) or Ni(2+).</text>
</comment>
<comment type="biophysicochemical properties">
    <kinetics>
        <KM evidence="3">1.23 mM for trehalulose-6'-phosphate</KM>
        <KM evidence="3">1.68 mM for turanose-6'-phosphate</KM>
        <KM evidence="3">1.2 mM for maltulose-6'-phosphate</KM>
        <KM evidence="3">5.63 mM for leucrose-6'-phosphate</KM>
        <KM evidence="3">2.42 mM for palatinose-6'-phosphate</KM>
        <KM evidence="3">3.08 mM for maltose-6'-phosphate</KM>
        <KM evidence="3">4.48 mM for isomaltose-6'-phosphate</KM>
        <KM evidence="3">0.82 mM for maltitol-6-phosphate</KM>
        <KM evidence="3">1.16 mM for trehalose-6-phosphate</KM>
        <KM evidence="3">0.05 mM for p-nitrophenyl-alpha-D-glucopyranoside 6-phosphate</KM>
        <Vmax evidence="3">0.89 umol/min/mg enzyme with trehalulose-6'-phosphate as substrate</Vmax>
        <Vmax evidence="3">2.41 umol/min/mg enzyme with turanose-6'-phosphate as substrate</Vmax>
        <Vmax evidence="3">1.15 umol/min/mg enzyme with maltulose-6'-phosphate as substrate</Vmax>
        <Vmax evidence="3">0.85 umol/min/mg enzyme with leucrose-6'-phosphate as substrate</Vmax>
        <Vmax evidence="3">0.9 umol/min/mg enzyme with palatinose-6'-phosphate as substrate</Vmax>
        <Vmax evidence="3">1.31 umol/min/mg enzyme with maltose-6'-phosphate as substrate</Vmax>
        <Vmax evidence="3">1.55 umol/min/mg enzyme with isomaltose-6'-phosphate as substrate</Vmax>
        <Vmax evidence="3">1.87 umol/min/mg enzyme with maltitol-6-phosphate as substrate</Vmax>
        <Vmax evidence="3">0.31 umol/min/mg enzyme with trehalose-6-phosphate as substrate</Vmax>
        <Vmax evidence="3">2.42 umol/min/mg enzyme with p-nitrophenyl-alpha-D-glucopyranoside 6-phosphate as substrate</Vmax>
    </kinetics>
</comment>
<comment type="pathway">
    <text>Glycan biosynthesis; sucrose metabolism.</text>
</comment>
<comment type="subunit">
    <text evidence="3">Homodimer.</text>
</comment>
<comment type="induction">
    <text evidence="2 3">By the five linkage-isomeric alpha-D-glucosyl-D-fructoses, or by maltose or maltitol.</text>
</comment>
<comment type="mass spectrometry"/>
<comment type="similarity">
    <text evidence="6">Belongs to the glycosyl hydrolase 4 family.</text>
</comment>
<gene>
    <name evidence="5" type="primary">aglB</name>
</gene>
<proteinExistence type="evidence at protein level"/>
<reference key="1">
    <citation type="journal article" date="2001" name="J. Biol. Chem.">
        <title>Metabolism of sucrose and its five linkage-isomeric alpha-D-glucosyl-D-fructoses by Klebsiella pneumoniae. Participation and properties of sucrose-6-phosphate hydrolase and phospho-alpha-glucosidase.</title>
        <authorList>
            <person name="Thompson J."/>
            <person name="Robrish S.A."/>
            <person name="Immel S."/>
            <person name="Lichtenthaler F.W."/>
            <person name="Hall B.G."/>
            <person name="Pikis A."/>
        </authorList>
    </citation>
    <scope>NUCLEOTIDE SEQUENCE [GENOMIC DNA]</scope>
    <scope>PROTEIN SEQUENCE OF 1-26</scope>
    <scope>FUNCTION</scope>
    <scope>CATALYTIC ACTIVITY</scope>
    <scope>COFACTOR</scope>
    <scope>SUBSTRATE SPECIFICITY</scope>
    <scope>KINETIC PARAMETERS</scope>
    <scope>INDUCTION</scope>
    <scope>SUBUNIT</scope>
    <scope>MASS SPECTROMETRY</scope>
    <source>
        <strain>ATCC 23357 / A-11</strain>
    </source>
</reference>
<reference key="2">
    <citation type="journal article" date="2001" name="Carbohydr. Res.">
        <title>Phosphorylation and metabolism of sucrose and its five linkage-isomeric alpha-D-glucosyl-D-fructoses by Klebsiella pneumoniae.</title>
        <authorList>
            <person name="Thompson J."/>
            <person name="Robrish S.A."/>
            <person name="Pikis A."/>
            <person name="Brust A."/>
            <person name="Lichtenthaler F.W."/>
        </authorList>
    </citation>
    <scope>PROTEIN SEQUENCE OF 1-25</scope>
    <scope>FUNCTION</scope>
    <scope>INDUCTION</scope>
    <source>
        <strain>ATCC 23357 / A-11</strain>
    </source>
</reference>
<dbReference type="EC" id="3.2.1.122" evidence="3"/>
<dbReference type="EMBL" id="AF337811">
    <property type="protein sequence ID" value="AAK01457.1"/>
    <property type="molecule type" value="Genomic_DNA"/>
</dbReference>
<dbReference type="RefSeq" id="WP_002923306.1">
    <property type="nucleotide sequence ID" value="NZ_WYAM01000023.1"/>
</dbReference>
<dbReference type="PDB" id="6DUX">
    <property type="method" value="X-ray"/>
    <property type="resolution" value="2.25 A"/>
    <property type="chains" value="A/B=2-440"/>
</dbReference>
<dbReference type="PDB" id="6DVV">
    <property type="method" value="X-ray"/>
    <property type="resolution" value="2.25 A"/>
    <property type="chains" value="A/B=2-440"/>
</dbReference>
<dbReference type="PDBsum" id="6DUX"/>
<dbReference type="PDBsum" id="6DVV"/>
<dbReference type="SMR" id="Q9AGA6"/>
<dbReference type="CAZy" id="GH4">
    <property type="family name" value="Glycoside Hydrolase Family 4"/>
</dbReference>
<dbReference type="BRENDA" id="3.2.1.122">
    <property type="organism ID" value="2814"/>
</dbReference>
<dbReference type="SABIO-RK" id="Q9AGA6"/>
<dbReference type="UniPathway" id="UPA00238"/>
<dbReference type="GO" id="GO:0050081">
    <property type="term" value="F:maltose-6'-phosphate glucosidase activity"/>
    <property type="evidence" value="ECO:0000314"/>
    <property type="project" value="CACAO"/>
</dbReference>
<dbReference type="GO" id="GO:0046872">
    <property type="term" value="F:metal ion binding"/>
    <property type="evidence" value="ECO:0007669"/>
    <property type="project" value="UniProtKB-KW"/>
</dbReference>
<dbReference type="GO" id="GO:0016616">
    <property type="term" value="F:oxidoreductase activity, acting on the CH-OH group of donors, NAD or NADP as acceptor"/>
    <property type="evidence" value="ECO:0007669"/>
    <property type="project" value="InterPro"/>
</dbReference>
<dbReference type="GO" id="GO:0005985">
    <property type="term" value="P:sucrose metabolic process"/>
    <property type="evidence" value="ECO:0007669"/>
    <property type="project" value="UniProtKB-UniPathway"/>
</dbReference>
<dbReference type="CDD" id="cd05298">
    <property type="entry name" value="GH4_GlvA_pagL_like"/>
    <property type="match status" value="1"/>
</dbReference>
<dbReference type="FunFam" id="3.40.50.720:FF:000295">
    <property type="entry name" value="6-phospho-alpha-glucosidase"/>
    <property type="match status" value="1"/>
</dbReference>
<dbReference type="FunFam" id="3.90.110.10:FF:000010">
    <property type="entry name" value="6-phospho-alpha-glucosidase"/>
    <property type="match status" value="1"/>
</dbReference>
<dbReference type="Gene3D" id="3.90.110.10">
    <property type="entry name" value="Lactate dehydrogenase/glycoside hydrolase, family 4, C-terminal"/>
    <property type="match status" value="1"/>
</dbReference>
<dbReference type="Gene3D" id="3.40.50.720">
    <property type="entry name" value="NAD(P)-binding Rossmann-like Domain"/>
    <property type="match status" value="1"/>
</dbReference>
<dbReference type="InterPro" id="IPR019802">
    <property type="entry name" value="GlycHydrolase_4_CS"/>
</dbReference>
<dbReference type="InterPro" id="IPR001088">
    <property type="entry name" value="Glyco_hydro_4"/>
</dbReference>
<dbReference type="InterPro" id="IPR022616">
    <property type="entry name" value="Glyco_hydro_4_C"/>
</dbReference>
<dbReference type="InterPro" id="IPR015955">
    <property type="entry name" value="Lactate_DH/Glyco_Ohase_4_C"/>
</dbReference>
<dbReference type="InterPro" id="IPR036291">
    <property type="entry name" value="NAD(P)-bd_dom_sf"/>
</dbReference>
<dbReference type="PANTHER" id="PTHR32092">
    <property type="entry name" value="6-PHOSPHO-BETA-GLUCOSIDASE-RELATED"/>
    <property type="match status" value="1"/>
</dbReference>
<dbReference type="PANTHER" id="PTHR32092:SF14">
    <property type="entry name" value="MALTOSE-6'-PHOSPHATE GLUCOSIDASE"/>
    <property type="match status" value="1"/>
</dbReference>
<dbReference type="Pfam" id="PF02056">
    <property type="entry name" value="Glyco_hydro_4"/>
    <property type="match status" value="1"/>
</dbReference>
<dbReference type="Pfam" id="PF11975">
    <property type="entry name" value="Glyco_hydro_4C"/>
    <property type="match status" value="1"/>
</dbReference>
<dbReference type="PRINTS" id="PR00732">
    <property type="entry name" value="GLHYDRLASE4"/>
</dbReference>
<dbReference type="SUPFAM" id="SSF56327">
    <property type="entry name" value="LDH C-terminal domain-like"/>
    <property type="match status" value="1"/>
</dbReference>
<dbReference type="SUPFAM" id="SSF51735">
    <property type="entry name" value="NAD(P)-binding Rossmann-fold domains"/>
    <property type="match status" value="1"/>
</dbReference>
<dbReference type="PROSITE" id="PS01324">
    <property type="entry name" value="GLYCOSYL_HYDROL_F4"/>
    <property type="match status" value="1"/>
</dbReference>
<name>AGLB_KLEPN</name>